<keyword id="KW-0002">3D-structure</keyword>
<keyword id="KW-0084">Basement membrane</keyword>
<keyword id="KW-0106">Calcium</keyword>
<keyword id="KW-0156">Chromatin regulator</keyword>
<keyword id="KW-0158">Chromosome</keyword>
<keyword id="KW-0186">Copper</keyword>
<keyword id="KW-1015">Disulfide bond</keyword>
<keyword id="KW-0256">Endoplasmic reticulum</keyword>
<keyword id="KW-0272">Extracellular matrix</keyword>
<keyword id="KW-0325">Glycoprotein</keyword>
<keyword id="KW-0886">LTQ</keyword>
<keyword id="KW-0479">Metal-binding</keyword>
<keyword id="KW-0539">Nucleus</keyword>
<keyword id="KW-0560">Oxidoreductase</keyword>
<keyword id="KW-1267">Proteomics identification</keyword>
<keyword id="KW-1185">Reference proteome</keyword>
<keyword id="KW-0677">Repeat</keyword>
<keyword id="KW-0678">Repressor</keyword>
<keyword id="KW-0964">Secreted</keyword>
<keyword id="KW-0732">Signal</keyword>
<keyword id="KW-0801">TPQ</keyword>
<keyword id="KW-0804">Transcription</keyword>
<keyword id="KW-0805">Transcription regulation</keyword>
<reference key="1">
    <citation type="journal article" date="1997" name="J. Biol. Chem.">
        <title>Regulation of a novel gene encoding a lysyl oxidase-related protein in cellular adhesion and senescence.</title>
        <authorList>
            <person name="Saito H."/>
            <person name="Papaconstantinou J."/>
            <person name="Sato H."/>
            <person name="Goldstein S."/>
        </authorList>
    </citation>
    <scope>NUCLEOTIDE SEQUENCE [MRNA]</scope>
</reference>
<reference key="2">
    <citation type="journal article" date="2004" name="Nat. Genet.">
        <title>Complete sequencing and characterization of 21,243 full-length human cDNAs.</title>
        <authorList>
            <person name="Ota T."/>
            <person name="Suzuki Y."/>
            <person name="Nishikawa T."/>
            <person name="Otsuki T."/>
            <person name="Sugiyama T."/>
            <person name="Irie R."/>
            <person name="Wakamatsu A."/>
            <person name="Hayashi K."/>
            <person name="Sato H."/>
            <person name="Nagai K."/>
            <person name="Kimura K."/>
            <person name="Makita H."/>
            <person name="Sekine M."/>
            <person name="Obayashi M."/>
            <person name="Nishi T."/>
            <person name="Shibahara T."/>
            <person name="Tanaka T."/>
            <person name="Ishii S."/>
            <person name="Yamamoto J."/>
            <person name="Saito K."/>
            <person name="Kawai Y."/>
            <person name="Isono Y."/>
            <person name="Nakamura Y."/>
            <person name="Nagahari K."/>
            <person name="Murakami K."/>
            <person name="Yasuda T."/>
            <person name="Iwayanagi T."/>
            <person name="Wagatsuma M."/>
            <person name="Shiratori A."/>
            <person name="Sudo H."/>
            <person name="Hosoiri T."/>
            <person name="Kaku Y."/>
            <person name="Kodaira H."/>
            <person name="Kondo H."/>
            <person name="Sugawara M."/>
            <person name="Takahashi M."/>
            <person name="Kanda K."/>
            <person name="Yokoi T."/>
            <person name="Furuya T."/>
            <person name="Kikkawa E."/>
            <person name="Omura Y."/>
            <person name="Abe K."/>
            <person name="Kamihara K."/>
            <person name="Katsuta N."/>
            <person name="Sato K."/>
            <person name="Tanikawa M."/>
            <person name="Yamazaki M."/>
            <person name="Ninomiya K."/>
            <person name="Ishibashi T."/>
            <person name="Yamashita H."/>
            <person name="Murakawa K."/>
            <person name="Fujimori K."/>
            <person name="Tanai H."/>
            <person name="Kimata M."/>
            <person name="Watanabe M."/>
            <person name="Hiraoka S."/>
            <person name="Chiba Y."/>
            <person name="Ishida S."/>
            <person name="Ono Y."/>
            <person name="Takiguchi S."/>
            <person name="Watanabe S."/>
            <person name="Yosida M."/>
            <person name="Hotuta T."/>
            <person name="Kusano J."/>
            <person name="Kanehori K."/>
            <person name="Takahashi-Fujii A."/>
            <person name="Hara H."/>
            <person name="Tanase T.-O."/>
            <person name="Nomura Y."/>
            <person name="Togiya S."/>
            <person name="Komai F."/>
            <person name="Hara R."/>
            <person name="Takeuchi K."/>
            <person name="Arita M."/>
            <person name="Imose N."/>
            <person name="Musashino K."/>
            <person name="Yuuki H."/>
            <person name="Oshima A."/>
            <person name="Sasaki N."/>
            <person name="Aotsuka S."/>
            <person name="Yoshikawa Y."/>
            <person name="Matsunawa H."/>
            <person name="Ichihara T."/>
            <person name="Shiohata N."/>
            <person name="Sano S."/>
            <person name="Moriya S."/>
            <person name="Momiyama H."/>
            <person name="Satoh N."/>
            <person name="Takami S."/>
            <person name="Terashima Y."/>
            <person name="Suzuki O."/>
            <person name="Nakagawa S."/>
            <person name="Senoh A."/>
            <person name="Mizoguchi H."/>
            <person name="Goto Y."/>
            <person name="Shimizu F."/>
            <person name="Wakebe H."/>
            <person name="Hishigaki H."/>
            <person name="Watanabe T."/>
            <person name="Sugiyama A."/>
            <person name="Takemoto M."/>
            <person name="Kawakami B."/>
            <person name="Yamazaki M."/>
            <person name="Watanabe K."/>
            <person name="Kumagai A."/>
            <person name="Itakura S."/>
            <person name="Fukuzumi Y."/>
            <person name="Fujimori Y."/>
            <person name="Komiyama M."/>
            <person name="Tashiro H."/>
            <person name="Tanigami A."/>
            <person name="Fujiwara T."/>
            <person name="Ono T."/>
            <person name="Yamada K."/>
            <person name="Fujii Y."/>
            <person name="Ozaki K."/>
            <person name="Hirao M."/>
            <person name="Ohmori Y."/>
            <person name="Kawabata A."/>
            <person name="Hikiji T."/>
            <person name="Kobatake N."/>
            <person name="Inagaki H."/>
            <person name="Ikema Y."/>
            <person name="Okamoto S."/>
            <person name="Okitani R."/>
            <person name="Kawakami T."/>
            <person name="Noguchi S."/>
            <person name="Itoh T."/>
            <person name="Shigeta K."/>
            <person name="Senba T."/>
            <person name="Matsumura K."/>
            <person name="Nakajima Y."/>
            <person name="Mizuno T."/>
            <person name="Morinaga M."/>
            <person name="Sasaki M."/>
            <person name="Togashi T."/>
            <person name="Oyama M."/>
            <person name="Hata H."/>
            <person name="Watanabe M."/>
            <person name="Komatsu T."/>
            <person name="Mizushima-Sugano J."/>
            <person name="Satoh T."/>
            <person name="Shirai Y."/>
            <person name="Takahashi Y."/>
            <person name="Nakagawa K."/>
            <person name="Okumura K."/>
            <person name="Nagase T."/>
            <person name="Nomura N."/>
            <person name="Kikuchi H."/>
            <person name="Masuho Y."/>
            <person name="Yamashita R."/>
            <person name="Nakai K."/>
            <person name="Yada T."/>
            <person name="Nakamura Y."/>
            <person name="Ohara O."/>
            <person name="Isogai T."/>
            <person name="Sugano S."/>
        </authorList>
    </citation>
    <scope>NUCLEOTIDE SEQUENCE [LARGE SCALE MRNA]</scope>
</reference>
<reference key="3">
    <citation type="submission" date="2005-04" db="EMBL/GenBank/DDBJ databases">
        <authorList>
            <person name="Suzuki Y."/>
            <person name="Sugano S."/>
            <person name="Totoki Y."/>
            <person name="Toyoda A."/>
            <person name="Takeda T."/>
            <person name="Sakaki Y."/>
            <person name="Tanaka A."/>
            <person name="Yokoyama S."/>
        </authorList>
    </citation>
    <scope>NUCLEOTIDE SEQUENCE [LARGE SCALE MRNA]</scope>
    <scope>VARIANT LEU-570</scope>
    <source>
        <tissue>Adipose tissue</tissue>
    </source>
</reference>
<reference key="4">
    <citation type="journal article" date="2006" name="Nature">
        <title>DNA sequence and analysis of human chromosome 8.</title>
        <authorList>
            <person name="Nusbaum C."/>
            <person name="Mikkelsen T.S."/>
            <person name="Zody M.C."/>
            <person name="Asakawa S."/>
            <person name="Taudien S."/>
            <person name="Garber M."/>
            <person name="Kodira C.D."/>
            <person name="Schueler M.G."/>
            <person name="Shimizu A."/>
            <person name="Whittaker C.A."/>
            <person name="Chang J.L."/>
            <person name="Cuomo C.A."/>
            <person name="Dewar K."/>
            <person name="FitzGerald M.G."/>
            <person name="Yang X."/>
            <person name="Allen N.R."/>
            <person name="Anderson S."/>
            <person name="Asakawa T."/>
            <person name="Blechschmidt K."/>
            <person name="Bloom T."/>
            <person name="Borowsky M.L."/>
            <person name="Butler J."/>
            <person name="Cook A."/>
            <person name="Corum B."/>
            <person name="DeArellano K."/>
            <person name="DeCaprio D."/>
            <person name="Dooley K.T."/>
            <person name="Dorris L. III"/>
            <person name="Engels R."/>
            <person name="Gloeckner G."/>
            <person name="Hafez N."/>
            <person name="Hagopian D.S."/>
            <person name="Hall J.L."/>
            <person name="Ishikawa S.K."/>
            <person name="Jaffe D.B."/>
            <person name="Kamat A."/>
            <person name="Kudoh J."/>
            <person name="Lehmann R."/>
            <person name="Lokitsang T."/>
            <person name="Macdonald P."/>
            <person name="Major J.E."/>
            <person name="Matthews C.D."/>
            <person name="Mauceli E."/>
            <person name="Menzel U."/>
            <person name="Mihalev A.H."/>
            <person name="Minoshima S."/>
            <person name="Murayama Y."/>
            <person name="Naylor J.W."/>
            <person name="Nicol R."/>
            <person name="Nguyen C."/>
            <person name="O'Leary S.B."/>
            <person name="O'Neill K."/>
            <person name="Parker S.C.J."/>
            <person name="Polley A."/>
            <person name="Raymond C.K."/>
            <person name="Reichwald K."/>
            <person name="Rodriguez J."/>
            <person name="Sasaki T."/>
            <person name="Schilhabel M."/>
            <person name="Siddiqui R."/>
            <person name="Smith C.L."/>
            <person name="Sneddon T.P."/>
            <person name="Talamas J.A."/>
            <person name="Tenzin P."/>
            <person name="Topham K."/>
            <person name="Venkataraman V."/>
            <person name="Wen G."/>
            <person name="Yamazaki S."/>
            <person name="Young S.K."/>
            <person name="Zeng Q."/>
            <person name="Zimmer A.R."/>
            <person name="Rosenthal A."/>
            <person name="Birren B.W."/>
            <person name="Platzer M."/>
            <person name="Shimizu N."/>
            <person name="Lander E.S."/>
        </authorList>
    </citation>
    <scope>NUCLEOTIDE SEQUENCE [LARGE SCALE GENOMIC DNA]</scope>
</reference>
<reference key="5">
    <citation type="journal article" date="2004" name="Genome Res.">
        <title>The status, quality, and expansion of the NIH full-length cDNA project: the Mammalian Gene Collection (MGC).</title>
        <authorList>
            <consortium name="The MGC Project Team"/>
        </authorList>
    </citation>
    <scope>NUCLEOTIDE SEQUENCE [LARGE SCALE MRNA]</scope>
    <scope>VARIANT LEU-570</scope>
    <source>
        <tissue>Kidney</tissue>
    </source>
</reference>
<reference key="6">
    <citation type="journal article" date="1999" name="J. Biol. Chem.">
        <title>The LOXL2 gene encodes a new lysyl oxidase-like protein and is expressed at high levels in reproductive tissues.</title>
        <authorList>
            <person name="Jourdan-Le Saux C."/>
            <person name="Tronecker H."/>
            <person name="Bogic L."/>
            <person name="Bryant-Greenwood G.D."/>
            <person name="Boyd C.D."/>
            <person name="Csiszar K."/>
        </authorList>
    </citation>
    <scope>NUCLEOTIDE SEQUENCE [MRNA] OF 202-774</scope>
    <scope>TISSUE SPECIFICITY</scope>
    <source>
        <tissue>Placenta</tissue>
        <tissue>Spleen</tissue>
    </source>
</reference>
<reference key="7">
    <citation type="journal article" date="2005" name="EMBO J.">
        <title>A molecular role for lysyl oxidase-like 2 enzyme in snail regulation and tumor progression.</title>
        <authorList>
            <person name="Peinado H."/>
            <person name="Del Carmen Iglesias-de la Cruz M."/>
            <person name="Olmeda D."/>
            <person name="Csiszar K."/>
            <person name="Fong K.S."/>
            <person name="Vega S."/>
            <person name="Nieto M.A."/>
            <person name="Cano A."/>
            <person name="Portillo F."/>
        </authorList>
    </citation>
    <scope>FUNCTION</scope>
    <scope>INTERACTION WITH SNAI1</scope>
</reference>
<reference key="8">
    <citation type="journal article" date="2010" name="J. Biol. Chem.">
        <title>The lysyl oxidases LOX and LOXL2 are necessary and sufficient to repress E-cadherin in hypoxia: insights into cellular transformation processes mediated by HIF-1.</title>
        <authorList>
            <person name="Schietke R."/>
            <person name="Warnecke C."/>
            <person name="Wacker I."/>
            <person name="Schodel J."/>
            <person name="Mole D.R."/>
            <person name="Campean V."/>
            <person name="Amann K."/>
            <person name="Goppelt-Struebe M."/>
            <person name="Behrens J."/>
            <person name="Eckardt K.U."/>
            <person name="Wiesener M.S."/>
        </authorList>
    </citation>
    <scope>FUNCTION</scope>
    <scope>INDUCTION</scope>
</reference>
<reference key="9">
    <citation type="journal article" date="2010" name="J. Biol. Chem.">
        <title>Modulation of lysyl oxidase-like 2 enzymatic activity by an allosteric antibody inhibitor.</title>
        <authorList>
            <person name="Rodriguez H.M."/>
            <person name="Vaysberg M."/>
            <person name="Mikels A."/>
            <person name="McCauley S."/>
            <person name="Velayo A.C."/>
            <person name="Garcia C."/>
            <person name="Smith V."/>
        </authorList>
    </citation>
    <scope>CATALYTIC ACTIVITY</scope>
    <scope>BIOPHYSICOCHEMICAL PROPERTIES</scope>
    <scope>ACTIVITY REGULATION</scope>
</reference>
<reference key="10">
    <citation type="journal article" date="2010" name="Nat. Med.">
        <title>Allosteric inhibition of lysyl oxidase-like-2 impedes the development of a pathologic microenvironment.</title>
        <authorList>
            <person name="Barry-Hamilton V."/>
            <person name="Spangler R."/>
            <person name="Marshall D."/>
            <person name="McCauley S."/>
            <person name="Rodriguez H.M."/>
            <person name="Oyasu M."/>
            <person name="Mikels A."/>
            <person name="Vaysberg M."/>
            <person name="Ghermazien H."/>
            <person name="Wai C."/>
            <person name="Garcia C.A."/>
            <person name="Velayo A.C."/>
            <person name="Jorgensen B."/>
            <person name="Biermann D."/>
            <person name="Tsai D."/>
            <person name="Green J."/>
            <person name="Zaffryar-Eilot S."/>
            <person name="Holzer A."/>
            <person name="Ogg S."/>
            <person name="Thai D."/>
            <person name="Neufeld G."/>
            <person name="Van Vlasselaer P."/>
            <person name="Smith V."/>
        </authorList>
    </citation>
    <scope>ACTIVITY REGULATION</scope>
</reference>
<reference key="11">
    <citation type="journal article" date="2011" name="Blood">
        <title>Lysyl oxidase-like protein-2 regulates sprouting angiogenesis and type IV collagen assembly in the endothelial basement membrane.</title>
        <authorList>
            <person name="Bignon M."/>
            <person name="Pichol-Thievend C."/>
            <person name="Hardouin J."/>
            <person name="Malbouyres M."/>
            <person name="Brechot N."/>
            <person name="Nasciutti L."/>
            <person name="Barret A."/>
            <person name="Teillon J."/>
            <person name="Guillon E."/>
            <person name="Etienne E."/>
            <person name="Caron M."/>
            <person name="Joubert-Caron R."/>
            <person name="Monnot C."/>
            <person name="Ruggiero F."/>
            <person name="Muller L."/>
            <person name="Germain S."/>
        </authorList>
    </citation>
    <scope>FUNCTION</scope>
</reference>
<reference key="12">
    <citation type="journal article" date="2011" name="Cancer Res.">
        <title>LOXL2-mediated matrix remodeling in metastasis and mammary gland involution.</title>
        <authorList>
            <person name="Barker H.E."/>
            <person name="Chang J."/>
            <person name="Cox T.R."/>
            <person name="Lang G."/>
            <person name="Bird D."/>
            <person name="Nicolau M."/>
            <person name="Evans H.R."/>
            <person name="Gartland A."/>
            <person name="Erler J.T."/>
        </authorList>
    </citation>
    <scope>ROLE IN TUMOR PROGRESSION</scope>
</reference>
<reference key="13">
    <citation type="journal article" date="2011" name="EMBO Mol. Med.">
        <title>Lysyl oxidase-like 2 (LOXL2), a new regulator of cell polarity required for metastatic dissemination of basal-like breast carcinomas.</title>
        <authorList>
            <person name="Moreno-Bueno G."/>
            <person name="Salvador F."/>
            <person name="Martin A."/>
            <person name="Floristan A."/>
            <person name="Cuevas E.P."/>
            <person name="Santos V."/>
            <person name="Montes A."/>
            <person name="Morales S."/>
            <person name="Castilla M.A."/>
            <person name="Rojo-Sebastian A."/>
            <person name="Martinez A."/>
            <person name="Hardisson D."/>
            <person name="Csiszar K."/>
            <person name="Portillo F."/>
            <person name="Peinado H."/>
            <person name="Palacios J."/>
            <person name="Cano A."/>
        </authorList>
    </citation>
    <scope>ROLE IN TUMOR PROGRESSION</scope>
</reference>
<reference key="14">
    <citation type="journal article" date="2011" name="Mol. Biol. Rep.">
        <title>The human lysyl oxidase-like 2 protein functions as an amine oxidase toward collagen and elastin.</title>
        <authorList>
            <person name="Kim Y.M."/>
            <person name="Kim E.C."/>
            <person name="Kim Y."/>
        </authorList>
    </citation>
    <scope>FUNCTION</scope>
    <scope>CATALYTIC ACTIVITY</scope>
    <scope>ACTIVITY REGULATION</scope>
</reference>
<reference key="15">
    <citation type="journal article" date="2012" name="Hum. Pathol.">
        <title>Reduced nuclear and ectopic cytoplasmic expression of lysyl oxidase-like 2 is associated with lymph node metastasis and poor prognosis in esophageal squamous cell carcinoma.</title>
        <authorList>
            <person name="Li T.Y."/>
            <person name="Xu L.Y."/>
            <person name="Wu Z.Y."/>
            <person name="Liao L.D."/>
            <person name="Shen J.H."/>
            <person name="Xu X.E."/>
            <person name="Du Z.P."/>
            <person name="Zhao Q."/>
            <person name="Li E.M."/>
        </authorList>
    </citation>
    <scope>SUBCELLULAR LOCATION</scope>
    <scope>TISSUE SPECIFICITY</scope>
</reference>
<reference key="16">
    <citation type="journal article" date="2012" name="J. Biol. Chem.">
        <title>The enzymatic activity of lysyl oxidas-like-2 (LOXL2) is not required for LOXL2-induced inhibition of keratinocyte differentiation.</title>
        <authorList>
            <person name="Lugassy J."/>
            <person name="Zaffryar-Eilot S."/>
            <person name="Soueid S."/>
            <person name="Mordoviz A."/>
            <person name="Smith V."/>
            <person name="Kessler O."/>
            <person name="Neufeld G."/>
        </authorList>
    </citation>
    <scope>MUTAGENESIS OF TYR-689</scope>
</reference>
<reference key="17">
    <citation type="journal article" date="2012" name="Mol. Cell">
        <title>Lysyl oxidase-like 2 deaminates lysine 4 in histone H3.</title>
        <authorList>
            <person name="Herranz N."/>
            <person name="Dave N."/>
            <person name="Millanes-Romero A."/>
            <person name="Morey L."/>
            <person name="Diaz V.M."/>
            <person name="Lorenz-Fonfria V."/>
            <person name="Gutierrez-Gallego R."/>
            <person name="Jeronimo C."/>
            <person name="Di Croce L."/>
            <person name="Garcia de Herreros A."/>
            <person name="Peiro S."/>
        </authorList>
    </citation>
    <scope>RETRACTED PAPER</scope>
</reference>
<reference key="18">
    <citation type="journal article" date="2016" name="Mol. Cell">
        <authorList>
            <person name="Herranz N."/>
            <person name="Dave N."/>
            <person name="Millanes-Romero A."/>
            <person name="Morey L."/>
            <person name="Diaz V.M."/>
            <person name="Lorenz-Fonfria V."/>
            <person name="Gutierrez-Gallego R."/>
            <person name="Jeronimo C."/>
            <person name="Di Croce L."/>
            <person name="Garcia de Herreros A."/>
            <person name="Peiro S."/>
        </authorList>
    </citation>
    <scope>RETRACTION NOTICE OF PUBMED:22483618</scope>
</reference>
<reference key="19">
    <citation type="journal article" date="2016" name="Matrix Biol.">
        <title>Functional consequence of fibulin-4 missense mutations associated with vascular and skeletal abnormalities and cutis laxa.</title>
        <authorList>
            <person name="Sasaki T."/>
            <person name="Hanisch F.G."/>
            <person name="Deutzmann R."/>
            <person name="Sakai L.Y."/>
            <person name="Sakuma T."/>
            <person name="Miyamoto T."/>
            <person name="Yamamoto T."/>
            <person name="Hannappel E."/>
            <person name="Chu M.L."/>
            <person name="Lanig H."/>
            <person name="von der Mark K."/>
        </authorList>
    </citation>
    <scope>INTERACTION WITH EFEMP2</scope>
</reference>
<reference key="20">
    <citation type="journal article" date="2013" name="J. Biol. Chem.">
        <title>Post-translational modifications of recombinant human lysyl oxidase-like 2 (rhLOXL2) secreted from Drosophila S2 cells.</title>
        <authorList>
            <person name="Xu L."/>
            <person name="Go E.P."/>
            <person name="Finney J."/>
            <person name="Moon H."/>
            <person name="Lantz M."/>
            <person name="Rebecchi K."/>
            <person name="Desaire H."/>
            <person name="Mure M."/>
        </authorList>
    </citation>
    <scope>CATALYTIC ACTIVITY</scope>
    <scope>ACTIVITY REGULATION</scope>
    <scope>BIOPHYSICOCHEMICAL PROPERTIES</scope>
    <scope>GLYCOSYLATION AT ASN-455 AND ASN-644</scope>
    <scope>MUTAGENESIS OF ASN-455 AND ASN-644</scope>
    <scope>CROSS-LINK FORMATION</scope>
    <scope>SUBCELLULAR LOCATION</scope>
</reference>
<reference key="21">
    <citation type="journal article" date="2013" name="Mol. Cell">
        <title>Regulation of heterochromatin transcription by Snail1/LOXL2 during epithelial-to-mesenchymal transition.</title>
        <authorList>
            <person name="Millanes-Romero A."/>
            <person name="Herranz N."/>
            <person name="Perrera V."/>
            <person name="Iturbide A."/>
            <person name="Loubat-Casanovas J."/>
            <person name="Gil J."/>
            <person name="Jenuwein T."/>
            <person name="Garcia de Herreros A."/>
            <person name="Peiro S."/>
        </authorList>
    </citation>
    <scope>FUNCTION</scope>
</reference>
<reference key="22">
    <citation type="journal article" date="2014" name="Biol. Open">
        <title>LOXL2 catalytically inactive mutants mediate epithelial-to-mesenchymal transition.</title>
        <authorList>
            <person name="Cuevas E.P."/>
            <person name="Moreno-Bueno G."/>
            <person name="Canesin G."/>
            <person name="Santos V."/>
            <person name="Portillo F."/>
            <person name="Cano A."/>
        </authorList>
    </citation>
    <scope>FUNCTION</scope>
    <scope>SUBCELLULAR LOCATION</scope>
    <scope>MUTAGENESIS OF 626-HIS--HIS-628</scope>
</reference>
<reference key="23">
    <citation type="journal article" date="2015" name="Mol. Cell">
        <title>LOXL2 oxidizes methylated TAF10 and controls TFIID-dependent genes during neural progenitor differentiation.</title>
        <authorList>
            <person name="Iturbide A."/>
            <person name="Pascual-Reguant L."/>
            <person name="Fargas L."/>
            <person name="Cebria J.P."/>
            <person name="Alsina B."/>
            <person name="Garcia de Herreros A."/>
            <person name="Peiro S."/>
        </authorList>
    </citation>
    <scope>FUNCTION</scope>
    <scope>INTERACTION WITH TAF10</scope>
</reference>
<reference key="24">
    <citation type="journal article" date="2016" name="FEBS J.">
        <title>Lysyl oxidase-like 2 (LOXL2) oxidizes trimethylated lysine 4 in histone H3.</title>
        <authorList>
            <person name="Herranz N."/>
            <person name="Dave N."/>
            <person name="Millanes-Romero A."/>
            <person name="Pascual-Reguant L."/>
            <person name="Morey L."/>
            <person name="Diaz V.M."/>
            <person name="Lorenz-Fonfria V."/>
            <person name="Gutierrez-Gallego R."/>
            <person name="Jeronimo C."/>
            <person name="Iturbide A."/>
            <person name="Di Croce L."/>
            <person name="Garcia de Herreros A."/>
            <person name="Peiro S."/>
        </authorList>
    </citation>
    <scope>FUNCTION</scope>
    <scope>SUBCELLULAR LOCATION</scope>
    <scope>MUTAGENESIS OF 626-HIS--HIS-628</scope>
</reference>
<reference key="25">
    <citation type="journal article" date="2017" name="Sci. Rep.">
        <title>LOXL2 drives epithelial-mesenchymal transition via activation of IRE1-XBP1 signalling pathway.</title>
        <authorList>
            <person name="Cuevas E.P."/>
            <person name="Eraso P."/>
            <person name="Mazon M.J."/>
            <person name="Santos V."/>
            <person name="Moreno-Bueno G."/>
            <person name="Cano A."/>
            <person name="Portillo F."/>
        </authorList>
    </citation>
    <scope>INTERACTION WITH HSPA5</scope>
    <scope>SUBCELLULAR LOCATION</scope>
</reference>
<reference evidence="32" key="26">
    <citation type="journal article" date="2018" name="Proc. Natl. Acad. Sci. U.S.A.">
        <title>Crystal structure of human lysyl oxidase-like 2 (hLOXL2) in a precursor state.</title>
        <authorList>
            <person name="Zhang X."/>
            <person name="Wang Q."/>
            <person name="Wu J."/>
            <person name="Wang J."/>
            <person name="Shi Y."/>
            <person name="Liu M."/>
        </authorList>
    </citation>
    <scope>X-RAY CRYSTALLOGRAPHY (2.40 ANGSTROMS) OF 318-774 IN COMPLEX WITH ZINC AND CALCIUM</scope>
    <scope>CATALYTIC ACTIVITY</scope>
    <scope>COFACTOR</scope>
    <scope>GLYCOSYLATION AT ASN-644</scope>
    <scope>DISULFIDE BONDS</scope>
    <scope>MUTAGENESIS OF HIS-626; HIS-628; HIS-630; LYS-653 AND TYR-689</scope>
    <scope>CROSS-LINK FORMATION</scope>
    <scope>TOPAQUINONE FORMATION</scope>
    <scope>IDENTIFICATION BY MASS SPECTROMETRY</scope>
</reference>
<comment type="function">
    <text evidence="2 7 8 9 12 16 17 18 20">Mediates the post-translational oxidative deamination of lysine residues on target proteins leading to the formation of deaminated lysine (allysine) (PubMed:27735137). Acts as a transcription corepressor and specifically mediates deamination of trimethylated 'Lys-4' of histone H3 (H3K4me3), a specific tag for epigenetic transcriptional activation (PubMed:27735137). Shows no activity against histone H3 when it is trimethylated on 'Lys-9' (H3K9me3) or 'Lys-27' (H3K27me3) or when 'Lys-4' is monomethylated (H3K4me1) or dimethylated (H3K4me2) (PubMed:27735137). Also mediates deamination of methylated TAF10, a member of the transcription factor IID (TFIID) complex, which induces release of TAF10 from promoters, leading to inhibition of TFIID-dependent transcription (PubMed:25959397). LOXL2-mediated deamination of TAF10 results in transcriptional repression of genes required for embryonic stem cell pluripotency including POU5F1/OCT4, NANOG, KLF4 and SOX2 (By similarity). Involved in epithelial to mesenchymal transition (EMT) via interaction with SNAI1 and participates in repression of E-cadherin CDH1, probably by mediating deamination of histone H3 (PubMed:16096638, PubMed:24414204, PubMed:27735137). During EMT, involved with SNAI1 in negatively regulating pericentromeric heterochromatin transcription (PubMed:24239292). SNAI1 recruits LOXL2 to pericentromeric regions to oxidize histone H3 and repress transcription which leads to release of heterochromatin component CBX5/HP1A, enabling chromatin reorganization and acquisition of mesenchymal traits (PubMed:24239292). Interacts with the endoplasmic reticulum protein HSPA5 which activates the IRE1-XBP1 pathway of the unfolded protein response, leading to expression of several transcription factors involved in EMT and subsequent EMT induction (PubMed:28332555). Involved in E-cadherin repression following hypoxia, a hallmark of EMT believed to amplify tumor aggressiveness, suggesting that it may play a role in tumor progression (PubMed:20026874). When secreted into the extracellular matrix, promotes cross-linking of extracellular matrix proteins by mediating oxidative deamination of peptidyl lysine residues in precursors to fibrous collagen and elastin (PubMed:20306300). Acts as a regulator of sprouting angiogenesis, probably via collagen IV scaffolding (PubMed:21835952). Acts as a regulator of chondrocyte differentiation, probably by regulating expression of factors that control chondrocyte differentiation (By similarity).</text>
</comment>
<comment type="catalytic activity">
    <reaction evidence="9 10 15 22">
        <text>L-lysyl-[protein] + O2 + H2O = (S)-2-amino-6-oxohexanoyl-[protein] + H2O2 + NH4(+)</text>
        <dbReference type="Rhea" id="RHEA:24544"/>
        <dbReference type="Rhea" id="RHEA-COMP:9752"/>
        <dbReference type="Rhea" id="RHEA-COMP:12448"/>
        <dbReference type="ChEBI" id="CHEBI:15377"/>
        <dbReference type="ChEBI" id="CHEBI:15379"/>
        <dbReference type="ChEBI" id="CHEBI:16240"/>
        <dbReference type="ChEBI" id="CHEBI:28938"/>
        <dbReference type="ChEBI" id="CHEBI:29969"/>
        <dbReference type="ChEBI" id="CHEBI:131803"/>
        <dbReference type="EC" id="1.4.3.13"/>
    </reaction>
</comment>
<comment type="cofactor">
    <cofactor evidence="22">
        <name>Cu cation</name>
        <dbReference type="ChEBI" id="CHEBI:23378"/>
    </cofactor>
</comment>
<comment type="cofactor">
    <cofactor evidence="22">
        <name>lysine tyrosylquinone residue</name>
        <dbReference type="ChEBI" id="CHEBI:20489"/>
    </cofactor>
    <text evidence="1">Contains 1 lysine tyrosylquinone.</text>
</comment>
<comment type="activity regulation">
    <text evidence="9 10 11 15">According to some reports, it is inhibited by beta-aminopropionitrile (BAPN) (PubMed:20439985, PubMed:23319596). According to another report, it is not inhibited by beta-aminopropionitrile (BAPN) (PubMed:20306300). Specifically inhibited by a mouse monoclonal antibody AB0023, inhibition occurs in a non-competitive manner.</text>
</comment>
<comment type="biophysicochemical properties">
    <kinetics>
        <KM evidence="10 15">1.01 mM for 1,5-diaminopentane</KM>
        <KM evidence="10 15">1.05 mM for spermine</KM>
        <KM evidence="10 15">0.59 uM for tropoelastin (without the first three SRCR domains)</KM>
        <KM evidence="10 15">0.62 uM for tropoelastin (without all four SRCR domains)</KM>
        <text>kcat is 2.04 min(-1) with tropoelastin as substrate (without the first three SRCR domains). kcat is 0.62 min(-1) with tropoelastin as substrate (without all four SRCR domains).</text>
    </kinetics>
</comment>
<comment type="subunit">
    <text evidence="7 18 19 21">Component of some chromatin repressor complex. Interacts with SNAI1 (PubMed:16096638). Interacts with TAF10 (PubMed:25959397). Interacts with HSPA5 (PubMed:28332555). Interacts with EFEMP2 (PubMed:27339457).</text>
</comment>
<comment type="interaction">
    <interactant intactId="EBI-7172227">
        <id>Q9Y4K0</id>
    </interactant>
    <interactant intactId="EBI-1028956">
        <id>P17655</id>
        <label>CAPN2</label>
    </interactant>
    <organismsDiffer>false</organismsDiffer>
    <experiments>2</experiments>
</comment>
<comment type="interaction">
    <interactant intactId="EBI-7172227">
        <id>Q9Y4K0</id>
    </interactant>
    <interactant intactId="EBI-7882008">
        <id>P15502-2</id>
        <label>ELN</label>
    </interactant>
    <organismsDiffer>false</organismsDiffer>
    <experiments>2</experiments>
</comment>
<comment type="interaction">
    <interactant intactId="EBI-7172227">
        <id>Q9Y4K0</id>
    </interactant>
    <interactant intactId="EBI-1220319">
        <id>P02751</id>
        <label>FN1</label>
    </interactant>
    <organismsDiffer>false</organismsDiffer>
    <experiments>2</experiments>
</comment>
<comment type="interaction">
    <interactant intactId="EBI-7172227">
        <id>Q9Y4K0</id>
    </interactant>
    <interactant intactId="EBI-4289961">
        <id>P49006</id>
        <label>MARCKSL1</label>
    </interactant>
    <organismsDiffer>false</organismsDiffer>
    <experiments>4</experiments>
</comment>
<comment type="interaction">
    <interactant intactId="EBI-7172227">
        <id>Q9Y4K0</id>
    </interactant>
    <interactant intactId="EBI-353844">
        <id>P08670</id>
        <label>VIM</label>
    </interactant>
    <organismsDiffer>false</organismsDiffer>
    <experiments>6</experiments>
</comment>
<comment type="subcellular location">
    <subcellularLocation>
        <location evidence="15">Secreted</location>
        <location evidence="15">Extracellular space</location>
        <location evidence="15">Extracellular matrix</location>
        <location evidence="15">Basement membrane</location>
    </subcellularLocation>
    <subcellularLocation>
        <location evidence="14 17">Nucleus</location>
    </subcellularLocation>
    <subcellularLocation>
        <location evidence="20">Chromosome</location>
    </subcellularLocation>
    <subcellularLocation>
        <location evidence="21">Endoplasmic reticulum</location>
    </subcellularLocation>
    <text evidence="14 15 17 20">Associated with chromatin (PubMed:27735137). It is unclear how LOXL2 is nuclear as it contains a signal sequence and has been shown to be secreted (PubMed:23319596). However, a number of reports confirm its intracellular location and its key role in transcription regulation (PubMed:22204712, PubMed:22483618).</text>
</comment>
<comment type="tissue specificity">
    <text evidence="5 14">Expressed in many tissues (PubMed:10212285). Highest expression in reproductive tissues, placenta, uterus and prostate (PubMed:10212285). In esophageal epithelium, expressed in the basal, prickle and granular cell layers (PubMed:22204712). Up-regulated in a number of cancers cells and tissues.</text>
</comment>
<comment type="induction">
    <text evidence="8">Strongly induced in hypoxia. Direct transcriptional target of HIF1A.</text>
</comment>
<comment type="domain">
    <text>The fourth SRCR domain plays an important role in optimizing the catalytic activity of the lysyl-oxidase like (LOX) catalytic domain.</text>
</comment>
<comment type="PTM">
    <text evidence="15 22">The lysine tyrosylquinone cross-link (LTQ) is generated by condensation of the epsilon-amino group of a lysine with a topaquinone produced by oxidation of tyrosine.</text>
</comment>
<comment type="PTM">
    <text evidence="15">N-glycosylated. N-glycosylation on Asn-455 and Asn-644 may be essential for proper folding and secretion; may be composed of a fucosylated carbohydrates attached to a trimannose N-linked glycan core.</text>
</comment>
<comment type="miscellaneous">
    <text evidence="25 26 27 28">Its overexpression in a number of cancers and its ability to promote epithelial to mesenchymal transition suggest that LOXL2 might play a role in tumor progression: expression is correlated with metastasis and decreased survival in patients with aggressive breast cancer (PubMed:21233336, PubMed:21732535). Allosteric inhibition by AB0023 inhibits formation of the tumor microenvironment and reduces metastatic tumor burden in xenograft models (PubMed:20818376, PubMed:21732535). However, inhibiting the enzyme activity of LOXL2 may not be sufficient, since inhibition of keratinocyte differentiation is not prevented in mutants that lack enzyme activity nor by inhibition of activity by the AB0023 antibody, thereby promoting development of squamous cell carcinomas (PubMed:22157764).</text>
</comment>
<comment type="similarity">
    <text evidence="24">Belongs to the lysyl oxidase family.</text>
</comment>
<comment type="caution">
    <text evidence="20 29 30">The original paper reporting the role of LOXL2 in deamination of trimethylated 'Lys-4' of histone H3 was retracted due to inappropriate manipulation of figure data (PubMed:22483618, PubMed:27392148). However, this role was confirmed in a subsequent publication (PubMed:27735137).</text>
</comment>
<comment type="sequence caution" evidence="24">
    <conflict type="erroneous termination">
        <sequence resource="EMBL-CDS" id="AAD34343"/>
    </conflict>
    <text>Extended C-terminus.</text>
</comment>
<comment type="online information" name="Atlas of Genetics and Cytogenetics in Oncology and Haematology">
    <link uri="https://atlasgeneticsoncology.org/gene/41192/LOXL2"/>
</comment>
<dbReference type="EC" id="1.4.3.13" evidence="9 10 15 22"/>
<dbReference type="EMBL" id="U89942">
    <property type="protein sequence ID" value="AAB49697.1"/>
    <property type="molecule type" value="mRNA"/>
</dbReference>
<dbReference type="EMBL" id="AK312266">
    <property type="protein sequence ID" value="BAG35197.1"/>
    <property type="molecule type" value="mRNA"/>
</dbReference>
<dbReference type="EMBL" id="AK222477">
    <property type="protein sequence ID" value="BAD96197.1"/>
    <property type="molecule type" value="mRNA"/>
</dbReference>
<dbReference type="EMBL" id="AC090197">
    <property type="status" value="NOT_ANNOTATED_CDS"/>
    <property type="molecule type" value="Genomic_DNA"/>
</dbReference>
<dbReference type="EMBL" id="BC000594">
    <property type="protein sequence ID" value="AAH00594.1"/>
    <property type="molecule type" value="mRNA"/>
</dbReference>
<dbReference type="EMBL" id="AF117949">
    <property type="protein sequence ID" value="AAD34343.1"/>
    <property type="status" value="ALT_SEQ"/>
    <property type="molecule type" value="mRNA"/>
</dbReference>
<dbReference type="CCDS" id="CCDS34864.1"/>
<dbReference type="RefSeq" id="NP_002309.1">
    <property type="nucleotide sequence ID" value="NM_002318.3"/>
</dbReference>
<dbReference type="PDB" id="5ZE3">
    <property type="method" value="X-ray"/>
    <property type="resolution" value="2.40 A"/>
    <property type="chains" value="A/B=318-774"/>
</dbReference>
<dbReference type="PDBsum" id="5ZE3"/>
<dbReference type="SMR" id="Q9Y4K0"/>
<dbReference type="BioGRID" id="110201">
    <property type="interactions" value="449"/>
</dbReference>
<dbReference type="FunCoup" id="Q9Y4K0">
    <property type="interactions" value="598"/>
</dbReference>
<dbReference type="IntAct" id="Q9Y4K0">
    <property type="interactions" value="98"/>
</dbReference>
<dbReference type="MINT" id="Q9Y4K0"/>
<dbReference type="STRING" id="9606.ENSP00000373783"/>
<dbReference type="BindingDB" id="Q9Y4K0"/>
<dbReference type="ChEMBL" id="CHEMBL3714029"/>
<dbReference type="DrugCentral" id="Q9Y4K0"/>
<dbReference type="GuidetoPHARMACOLOGY" id="2853"/>
<dbReference type="GlyConnect" id="1480">
    <property type="glycosylation" value="1 N-Linked glycan (1 site)"/>
</dbReference>
<dbReference type="GlyCosmos" id="Q9Y4K0">
    <property type="glycosylation" value="3 sites, 1 glycan"/>
</dbReference>
<dbReference type="GlyGen" id="Q9Y4K0">
    <property type="glycosylation" value="6 sites, 16 N-linked glycans (2 sites), 1 O-linked glycan (1 site)"/>
</dbReference>
<dbReference type="iPTMnet" id="Q9Y4K0"/>
<dbReference type="PhosphoSitePlus" id="Q9Y4K0"/>
<dbReference type="BioMuta" id="LOXL2"/>
<dbReference type="DMDM" id="13878585"/>
<dbReference type="jPOST" id="Q9Y4K0"/>
<dbReference type="MassIVE" id="Q9Y4K0"/>
<dbReference type="PaxDb" id="9606-ENSP00000373783"/>
<dbReference type="PeptideAtlas" id="Q9Y4K0"/>
<dbReference type="ProteomicsDB" id="86223"/>
<dbReference type="Pumba" id="Q9Y4K0"/>
<dbReference type="ABCD" id="Q9Y4K0">
    <property type="antibodies" value="1 sequenced antibody"/>
</dbReference>
<dbReference type="Antibodypedia" id="22758">
    <property type="antibodies" value="464 antibodies from 36 providers"/>
</dbReference>
<dbReference type="DNASU" id="4017"/>
<dbReference type="Ensembl" id="ENST00000389131.8">
    <property type="protein sequence ID" value="ENSP00000373783.3"/>
    <property type="gene ID" value="ENSG00000134013.16"/>
</dbReference>
<dbReference type="GeneID" id="4017"/>
<dbReference type="KEGG" id="hsa:4017"/>
<dbReference type="MANE-Select" id="ENST00000389131.8">
    <property type="protein sequence ID" value="ENSP00000373783.3"/>
    <property type="RefSeq nucleotide sequence ID" value="NM_002318.3"/>
    <property type="RefSeq protein sequence ID" value="NP_002309.1"/>
</dbReference>
<dbReference type="UCSC" id="uc003xdh.2">
    <property type="organism name" value="human"/>
</dbReference>
<dbReference type="AGR" id="HGNC:6666"/>
<dbReference type="CTD" id="4017"/>
<dbReference type="DisGeNET" id="4017"/>
<dbReference type="GeneCards" id="LOXL2"/>
<dbReference type="HGNC" id="HGNC:6666">
    <property type="gene designation" value="LOXL2"/>
</dbReference>
<dbReference type="HPA" id="ENSG00000134013">
    <property type="expression patterns" value="Tissue enhanced (smooth)"/>
</dbReference>
<dbReference type="MIM" id="606663">
    <property type="type" value="gene"/>
</dbReference>
<dbReference type="neXtProt" id="NX_Q9Y4K0"/>
<dbReference type="OpenTargets" id="ENSG00000134013"/>
<dbReference type="PharmGKB" id="PA30429"/>
<dbReference type="VEuPathDB" id="HostDB:ENSG00000134013"/>
<dbReference type="eggNOG" id="ENOG502QSX8">
    <property type="taxonomic scope" value="Eukaryota"/>
</dbReference>
<dbReference type="GeneTree" id="ENSGT00940000155874"/>
<dbReference type="HOGENOM" id="CLU_002555_3_0_1"/>
<dbReference type="InParanoid" id="Q9Y4K0"/>
<dbReference type="OMA" id="MALSHCR"/>
<dbReference type="OrthoDB" id="547291at2759"/>
<dbReference type="PAN-GO" id="Q9Y4K0">
    <property type="GO annotations" value="5 GO annotations based on evolutionary models"/>
</dbReference>
<dbReference type="PhylomeDB" id="Q9Y4K0"/>
<dbReference type="TreeFam" id="TF326061"/>
<dbReference type="BRENDA" id="1.4.3.13">
    <property type="organism ID" value="2681"/>
</dbReference>
<dbReference type="PathwayCommons" id="Q9Y4K0"/>
<dbReference type="Reactome" id="R-HSA-1566948">
    <property type="pathway name" value="Elastic fibre formation"/>
</dbReference>
<dbReference type="Reactome" id="R-HSA-2243919">
    <property type="pathway name" value="Crosslinking of collagen fibrils"/>
</dbReference>
<dbReference type="SignaLink" id="Q9Y4K0"/>
<dbReference type="SIGNOR" id="Q9Y4K0"/>
<dbReference type="BioGRID-ORCS" id="4017">
    <property type="hits" value="9 hits in 1152 CRISPR screens"/>
</dbReference>
<dbReference type="ChiTaRS" id="LOXL2">
    <property type="organism name" value="human"/>
</dbReference>
<dbReference type="GeneWiki" id="LOXL2"/>
<dbReference type="GenomeRNAi" id="4017"/>
<dbReference type="Pharos" id="Q9Y4K0">
    <property type="development level" value="Tchem"/>
</dbReference>
<dbReference type="PRO" id="PR:Q9Y4K0"/>
<dbReference type="Proteomes" id="UP000005640">
    <property type="component" value="Chromosome 8"/>
</dbReference>
<dbReference type="RNAct" id="Q9Y4K0">
    <property type="molecule type" value="protein"/>
</dbReference>
<dbReference type="Bgee" id="ENSG00000134013">
    <property type="expression patterns" value="Expressed in stromal cell of endometrium and 145 other cell types or tissues"/>
</dbReference>
<dbReference type="ExpressionAtlas" id="Q9Y4K0">
    <property type="expression patterns" value="baseline and differential"/>
</dbReference>
<dbReference type="GO" id="GO:0005604">
    <property type="term" value="C:basement membrane"/>
    <property type="evidence" value="ECO:0000250"/>
    <property type="project" value="UniProtKB"/>
</dbReference>
<dbReference type="GO" id="GO:0000785">
    <property type="term" value="C:chromatin"/>
    <property type="evidence" value="ECO:0000314"/>
    <property type="project" value="UniProtKB"/>
</dbReference>
<dbReference type="GO" id="GO:0062023">
    <property type="term" value="C:collagen-containing extracellular matrix"/>
    <property type="evidence" value="ECO:0007005"/>
    <property type="project" value="BHF-UCL"/>
</dbReference>
<dbReference type="GO" id="GO:0005783">
    <property type="term" value="C:endoplasmic reticulum"/>
    <property type="evidence" value="ECO:0000314"/>
    <property type="project" value="UniProtKB"/>
</dbReference>
<dbReference type="GO" id="GO:0005615">
    <property type="term" value="C:extracellular space"/>
    <property type="evidence" value="ECO:0000314"/>
    <property type="project" value="UniProtKB"/>
</dbReference>
<dbReference type="GO" id="GO:0016020">
    <property type="term" value="C:membrane"/>
    <property type="evidence" value="ECO:0007669"/>
    <property type="project" value="InterPro"/>
</dbReference>
<dbReference type="GO" id="GO:0005654">
    <property type="term" value="C:nucleoplasm"/>
    <property type="evidence" value="ECO:0000314"/>
    <property type="project" value="HPA"/>
</dbReference>
<dbReference type="GO" id="GO:0005634">
    <property type="term" value="C:nucleus"/>
    <property type="evidence" value="ECO:0000314"/>
    <property type="project" value="UniProtKB"/>
</dbReference>
<dbReference type="GO" id="GO:0005509">
    <property type="term" value="F:calcium ion binding"/>
    <property type="evidence" value="ECO:0000314"/>
    <property type="project" value="UniProtKB"/>
</dbReference>
<dbReference type="GO" id="GO:0005507">
    <property type="term" value="F:copper ion binding"/>
    <property type="evidence" value="ECO:0000314"/>
    <property type="project" value="UniProtKB"/>
</dbReference>
<dbReference type="GO" id="GO:0070492">
    <property type="term" value="F:oligosaccharide binding"/>
    <property type="evidence" value="ECO:0000314"/>
    <property type="project" value="UniProtKB"/>
</dbReference>
<dbReference type="GO" id="GO:0004720">
    <property type="term" value="F:protein-lysine 6-oxidase activity"/>
    <property type="evidence" value="ECO:0000314"/>
    <property type="project" value="UniProtKB"/>
</dbReference>
<dbReference type="GO" id="GO:0030199">
    <property type="term" value="P:collagen fibril organization"/>
    <property type="evidence" value="ECO:0000315"/>
    <property type="project" value="UniProtKB"/>
</dbReference>
<dbReference type="GO" id="GO:0043542">
    <property type="term" value="P:endothelial cell migration"/>
    <property type="evidence" value="ECO:0000315"/>
    <property type="project" value="UniProtKB"/>
</dbReference>
<dbReference type="GO" id="GO:0001935">
    <property type="term" value="P:endothelial cell proliferation"/>
    <property type="evidence" value="ECO:0000315"/>
    <property type="project" value="UniProtKB"/>
</dbReference>
<dbReference type="GO" id="GO:0001837">
    <property type="term" value="P:epithelial to mesenchymal transition"/>
    <property type="evidence" value="ECO:0000314"/>
    <property type="project" value="UniProtKB"/>
</dbReference>
<dbReference type="GO" id="GO:0070828">
    <property type="term" value="P:heterochromatin organization"/>
    <property type="evidence" value="ECO:0000315"/>
    <property type="project" value="UniProtKB"/>
</dbReference>
<dbReference type="GO" id="GO:0045892">
    <property type="term" value="P:negative regulation of DNA-templated transcription"/>
    <property type="evidence" value="ECO:0000314"/>
    <property type="project" value="UniProtKB"/>
</dbReference>
<dbReference type="GO" id="GO:1902455">
    <property type="term" value="P:negative regulation of stem cell population maintenance"/>
    <property type="evidence" value="ECO:0000250"/>
    <property type="project" value="UniProtKB"/>
</dbReference>
<dbReference type="GO" id="GO:0000122">
    <property type="term" value="P:negative regulation of transcription by RNA polymerase II"/>
    <property type="evidence" value="ECO:0000314"/>
    <property type="project" value="UniProtKB"/>
</dbReference>
<dbReference type="GO" id="GO:0018057">
    <property type="term" value="P:peptidyl-lysine oxidation"/>
    <property type="evidence" value="ECO:0000314"/>
    <property type="project" value="UniProtKB"/>
</dbReference>
<dbReference type="GO" id="GO:0032332">
    <property type="term" value="P:positive regulation of chondrocyte differentiation"/>
    <property type="evidence" value="ECO:0000250"/>
    <property type="project" value="UniProtKB"/>
</dbReference>
<dbReference type="GO" id="GO:0010718">
    <property type="term" value="P:positive regulation of epithelial to mesenchymal transition"/>
    <property type="evidence" value="ECO:0000315"/>
    <property type="project" value="UniProtKB"/>
</dbReference>
<dbReference type="GO" id="GO:0036211">
    <property type="term" value="P:protein modification process"/>
    <property type="evidence" value="ECO:0000314"/>
    <property type="project" value="UniProtKB"/>
</dbReference>
<dbReference type="GO" id="GO:0046688">
    <property type="term" value="P:response to copper ion"/>
    <property type="evidence" value="ECO:0000314"/>
    <property type="project" value="UniProtKB"/>
</dbReference>
<dbReference type="GO" id="GO:0001666">
    <property type="term" value="P:response to hypoxia"/>
    <property type="evidence" value="ECO:0000250"/>
    <property type="project" value="UniProtKB"/>
</dbReference>
<dbReference type="GO" id="GO:0002040">
    <property type="term" value="P:sprouting angiogenesis"/>
    <property type="evidence" value="ECO:0000315"/>
    <property type="project" value="UniProtKB"/>
</dbReference>
<dbReference type="FunFam" id="3.10.250.10:FF:000001">
    <property type="entry name" value="Lysyl oxidase 4 isoform X1"/>
    <property type="match status" value="2"/>
</dbReference>
<dbReference type="FunFam" id="3.10.250.10:FF:000008">
    <property type="entry name" value="Lysyl oxidase homolog 2"/>
    <property type="match status" value="1"/>
</dbReference>
<dbReference type="FunFam" id="3.10.250.10:FF:000014">
    <property type="entry name" value="Lysyl oxidase homolog 2"/>
    <property type="match status" value="1"/>
</dbReference>
<dbReference type="Gene3D" id="3.10.250.10">
    <property type="entry name" value="SRCR-like domain"/>
    <property type="match status" value="4"/>
</dbReference>
<dbReference type="InterPro" id="IPR050912">
    <property type="entry name" value="LOX-like_protein"/>
</dbReference>
<dbReference type="InterPro" id="IPR001695">
    <property type="entry name" value="Lysyl_oxidase"/>
</dbReference>
<dbReference type="InterPro" id="IPR019828">
    <property type="entry name" value="Lysyl_oxidase_CS"/>
</dbReference>
<dbReference type="InterPro" id="IPR001190">
    <property type="entry name" value="SRCR"/>
</dbReference>
<dbReference type="InterPro" id="IPR036772">
    <property type="entry name" value="SRCR-like_dom_sf"/>
</dbReference>
<dbReference type="PANTHER" id="PTHR45817:SF1">
    <property type="entry name" value="LYSYL OXIDASE HOMOLOG 2"/>
    <property type="match status" value="1"/>
</dbReference>
<dbReference type="PANTHER" id="PTHR45817">
    <property type="entry name" value="LYSYL OXIDASE-LIKE-RELATED"/>
    <property type="match status" value="1"/>
</dbReference>
<dbReference type="Pfam" id="PF01186">
    <property type="entry name" value="Lysyl_oxidase"/>
    <property type="match status" value="1"/>
</dbReference>
<dbReference type="Pfam" id="PF00530">
    <property type="entry name" value="SRCR"/>
    <property type="match status" value="4"/>
</dbReference>
<dbReference type="PRINTS" id="PR00074">
    <property type="entry name" value="LYSYLOXIDASE"/>
</dbReference>
<dbReference type="PRINTS" id="PR00258">
    <property type="entry name" value="SPERACTRCPTR"/>
</dbReference>
<dbReference type="SMART" id="SM00202">
    <property type="entry name" value="SR"/>
    <property type="match status" value="4"/>
</dbReference>
<dbReference type="SUPFAM" id="SSF56487">
    <property type="entry name" value="SRCR-like"/>
    <property type="match status" value="4"/>
</dbReference>
<dbReference type="PROSITE" id="PS00926">
    <property type="entry name" value="LYSYL_OXIDASE"/>
    <property type="match status" value="1"/>
</dbReference>
<dbReference type="PROSITE" id="PS00420">
    <property type="entry name" value="SRCR_1"/>
    <property type="match status" value="2"/>
</dbReference>
<dbReference type="PROSITE" id="PS50287">
    <property type="entry name" value="SRCR_2"/>
    <property type="match status" value="4"/>
</dbReference>
<protein>
    <recommendedName>
        <fullName>Lysyl oxidase homolog 2</fullName>
        <ecNumber evidence="9 10 15 22">1.4.3.13</ecNumber>
    </recommendedName>
    <alternativeName>
        <fullName>Lysyl oxidase-like protein 2</fullName>
    </alternativeName>
    <alternativeName>
        <fullName>Lysyl oxidase-related protein 2</fullName>
    </alternativeName>
    <alternativeName>
        <fullName>Lysyl oxidase-related protein WS9-14</fullName>
    </alternativeName>
</protein>
<feature type="signal peptide" evidence="3">
    <location>
        <begin position="1"/>
        <end position="25"/>
    </location>
</feature>
<feature type="chain" id="PRO_0000018532" description="Lysyl oxidase homolog 2">
    <location>
        <begin position="26"/>
        <end position="774"/>
    </location>
</feature>
<feature type="domain" description="SRCR 1" evidence="4">
    <location>
        <begin position="58"/>
        <end position="159"/>
    </location>
</feature>
<feature type="domain" description="SRCR 2" evidence="4">
    <location>
        <begin position="188"/>
        <end position="302"/>
    </location>
</feature>
<feature type="domain" description="SRCR 3" evidence="4">
    <location>
        <begin position="326"/>
        <end position="425"/>
    </location>
</feature>
<feature type="domain" description="SRCR 4" evidence="4">
    <location>
        <begin position="435"/>
        <end position="544"/>
    </location>
</feature>
<feature type="region of interest" description="Lysyl-oxidase like">
    <location>
        <begin position="548"/>
        <end position="751"/>
    </location>
</feature>
<feature type="binding site" evidence="31">
    <location>
        <position position="549"/>
    </location>
    <ligand>
        <name>Ca(2+)</name>
        <dbReference type="ChEBI" id="CHEBI:29108"/>
    </ligand>
</feature>
<feature type="binding site" evidence="31">
    <location>
        <position position="550"/>
    </location>
    <ligand>
        <name>Ca(2+)</name>
        <dbReference type="ChEBI" id="CHEBI:29108"/>
    </ligand>
</feature>
<feature type="binding site" evidence="31">
    <location>
        <position position="626"/>
    </location>
    <ligand>
        <name>Cu cation</name>
        <dbReference type="ChEBI" id="CHEBI:23378"/>
    </ligand>
</feature>
<feature type="binding site" evidence="31">
    <location>
        <position position="628"/>
    </location>
    <ligand>
        <name>Cu cation</name>
        <dbReference type="ChEBI" id="CHEBI:23378"/>
    </ligand>
</feature>
<feature type="binding site" evidence="31">
    <location>
        <position position="630"/>
    </location>
    <ligand>
        <name>Cu cation</name>
        <dbReference type="ChEBI" id="CHEBI:23378"/>
    </ligand>
</feature>
<feature type="binding site" evidence="31">
    <location>
        <position position="722"/>
    </location>
    <ligand>
        <name>Ca(2+)</name>
        <dbReference type="ChEBI" id="CHEBI:29108"/>
    </ligand>
</feature>
<feature type="binding site" evidence="31">
    <location>
        <position position="724"/>
    </location>
    <ligand>
        <name>Ca(2+)</name>
        <dbReference type="ChEBI" id="CHEBI:29108"/>
    </ligand>
</feature>
<feature type="binding site" evidence="31">
    <location>
        <position position="727"/>
    </location>
    <ligand>
        <name>Ca(2+)</name>
        <dbReference type="ChEBI" id="CHEBI:29108"/>
    </ligand>
</feature>
<feature type="binding site" evidence="31">
    <location>
        <position position="728"/>
    </location>
    <ligand>
        <name>Ca(2+)</name>
        <dbReference type="ChEBI" id="CHEBI:29108"/>
    </ligand>
</feature>
<feature type="modified residue" description="2',4',5'-topaquinone" evidence="22">
    <location>
        <position position="689"/>
    </location>
</feature>
<feature type="glycosylation site" description="N-linked (GlcNAc...) asparagine" evidence="3">
    <location>
        <position position="288"/>
    </location>
</feature>
<feature type="glycosylation site" description="N-linked (GlcNAc...) (complex) asparagine" evidence="15">
    <location>
        <position position="455"/>
    </location>
</feature>
<feature type="glycosylation site" description="N-linked (GlcNAc...) (complex) asparagine" evidence="15 22 32">
    <location>
        <position position="644"/>
    </location>
</feature>
<feature type="disulfide bond" evidence="4">
    <location>
        <begin position="84"/>
        <end position="148"/>
    </location>
</feature>
<feature type="disulfide bond" evidence="4">
    <location>
        <begin position="97"/>
        <end position="158"/>
    </location>
</feature>
<feature type="disulfide bond" evidence="4">
    <location>
        <begin position="128"/>
        <end position="138"/>
    </location>
</feature>
<feature type="disulfide bond" evidence="4">
    <location>
        <begin position="218"/>
        <end position="291"/>
    </location>
</feature>
<feature type="disulfide bond" evidence="4">
    <location>
        <begin position="231"/>
        <end position="301"/>
    </location>
</feature>
<feature type="disulfide bond" evidence="4">
    <location>
        <begin position="265"/>
        <end position="275"/>
    </location>
</feature>
<feature type="disulfide bond" evidence="4">
    <location>
        <begin position="351"/>
        <end position="414"/>
    </location>
</feature>
<feature type="disulfide bond" evidence="4 22 32">
    <location>
        <begin position="364"/>
        <end position="424"/>
    </location>
</feature>
<feature type="disulfide bond" evidence="4 22 32">
    <location>
        <begin position="395"/>
        <end position="405"/>
    </location>
</feature>
<feature type="disulfide bond" evidence="4 22 32">
    <location>
        <begin position="464"/>
        <end position="530"/>
    </location>
</feature>
<feature type="disulfide bond" evidence="4 22 32">
    <location>
        <begin position="477"/>
        <end position="543"/>
    </location>
</feature>
<feature type="disulfide bond" evidence="4 22 32">
    <location>
        <begin position="511"/>
        <end position="521"/>
    </location>
</feature>
<feature type="disulfide bond" evidence="22 32">
    <location>
        <begin position="573"/>
        <end position="625"/>
    </location>
</feature>
<feature type="disulfide bond" evidence="22 32">
    <location>
        <begin position="579"/>
        <end position="695"/>
    </location>
</feature>
<feature type="disulfide bond" evidence="22 32">
    <location>
        <begin position="657"/>
        <end position="673"/>
    </location>
</feature>
<feature type="disulfide bond" evidence="22 32">
    <location>
        <begin position="663"/>
        <end position="685"/>
    </location>
</feature>
<feature type="disulfide bond" evidence="4 22 32">
    <location>
        <begin position="732"/>
        <end position="746"/>
    </location>
</feature>
<feature type="cross-link" description="Lysine tyrosylquinone (Lys-Tyr)" evidence="15 22">
    <location>
        <begin position="653"/>
        <end position="689"/>
    </location>
</feature>
<feature type="sequence variant" id="VAR_050010" description="In dbSNP:rs4602894.">
    <original>S</original>
    <variation>W</variation>
    <location>
        <position position="359"/>
    </location>
</feature>
<feature type="sequence variant" id="VAR_024527" description="In dbSNP:rs1063582." evidence="6 23">
    <original>M</original>
    <variation>L</variation>
    <location>
        <position position="570"/>
    </location>
</feature>
<feature type="mutagenesis site" description="Inhibits secretion." evidence="15">
    <original>N</original>
    <variation>Q</variation>
    <location>
        <position position="455"/>
    </location>
</feature>
<feature type="mutagenesis site" description="Abolishes oxidase activity and oxidation of trimethylated 'Lys-4' of histone H3 but does not affect secretion, interaction with SNAI1, binding to the CDH1 promoter, repression of CDH1 transcription or ability to induce EMT." evidence="17 20">
    <original>HRH</original>
    <variation>ARA</variation>
    <location>
        <begin position="626"/>
        <end position="628"/>
    </location>
</feature>
<feature type="mutagenesis site" description="Loss of enzyme activity." evidence="22">
    <original>H</original>
    <variation>A</variation>
    <location>
        <position position="626"/>
    </location>
</feature>
<feature type="mutagenesis site" description="Loss of enzyme activity." evidence="22">
    <original>H</original>
    <variation>A</variation>
    <location>
        <position position="628"/>
    </location>
</feature>
<feature type="mutagenesis site" description="Loss of enzyme activity." evidence="22">
    <original>H</original>
    <variation>A</variation>
    <location>
        <position position="630"/>
    </location>
</feature>
<feature type="mutagenesis site" description="Inhibits secretion." evidence="15">
    <original>N</original>
    <variation>Q</variation>
    <location>
        <position position="644"/>
    </location>
</feature>
<feature type="mutagenesis site" description="Loss of enzyme activity." evidence="22">
    <original>K</original>
    <variation>A</variation>
    <location>
        <position position="653"/>
    </location>
</feature>
<feature type="mutagenesis site" description="Loss of enzyme activity." evidence="22">
    <original>Y</original>
    <variation>A</variation>
    <location>
        <position position="689"/>
    </location>
</feature>
<feature type="mutagenesis site" description="Does not affect ability to inhibit keratinocyte differentiation." evidence="13">
    <original>Y</original>
    <variation>F</variation>
    <location>
        <position position="689"/>
    </location>
</feature>
<feature type="sequence conflict" description="In Ref. 2; BAG35197." evidence="24" ref="2">
    <original>E</original>
    <variation>K</variation>
    <location>
        <position position="184"/>
    </location>
</feature>
<feature type="sequence conflict" description="In Ref. 3; BAD96197." evidence="24" ref="3">
    <original>E</original>
    <variation>G</variation>
    <location>
        <position position="239"/>
    </location>
</feature>
<feature type="sequence conflict" description="In Ref. 6; AAD34343." evidence="24" ref="6">
    <original>L</original>
    <variation>Q</variation>
    <location>
        <position position="295"/>
    </location>
</feature>
<feature type="sequence conflict" description="In Ref. 2; BAG35197." evidence="24" ref="2">
    <original>Q</original>
    <variation>R</variation>
    <location>
        <position position="536"/>
    </location>
</feature>
<feature type="sequence conflict" description="In Ref. 6; AAD34343." evidence="24" ref="6">
    <original>H</original>
    <variation>Q</variation>
    <location>
        <position position="652"/>
    </location>
</feature>
<feature type="sequence conflict" description="In Ref. 6; AAD34343." evidence="24" ref="6">
    <original>C</original>
    <variation>S</variation>
    <location>
        <position position="746"/>
    </location>
</feature>
<feature type="strand" evidence="33">
    <location>
        <begin position="325"/>
        <end position="333"/>
    </location>
</feature>
<feature type="strand" evidence="33">
    <location>
        <begin position="336"/>
        <end position="343"/>
    </location>
</feature>
<feature type="strand" evidence="33">
    <location>
        <begin position="346"/>
        <end position="351"/>
    </location>
</feature>
<feature type="helix" evidence="33">
    <location>
        <begin position="357"/>
        <end position="366"/>
    </location>
</feature>
<feature type="strand" evidence="33">
    <location>
        <begin position="372"/>
        <end position="376"/>
    </location>
</feature>
<feature type="turn" evidence="33">
    <location>
        <begin position="378"/>
        <end position="381"/>
    </location>
</feature>
<feature type="strand" evidence="33">
    <location>
        <begin position="388"/>
        <end position="390"/>
    </location>
</feature>
<feature type="strand" evidence="33">
    <location>
        <begin position="404"/>
        <end position="406"/>
    </location>
</feature>
<feature type="strand" evidence="33">
    <location>
        <begin position="421"/>
        <end position="424"/>
    </location>
</feature>
<feature type="strand" evidence="33">
    <location>
        <begin position="434"/>
        <end position="441"/>
    </location>
</feature>
<feature type="strand" evidence="33">
    <location>
        <begin position="445"/>
        <end position="454"/>
    </location>
</feature>
<feature type="strand" evidence="33">
    <location>
        <begin position="457"/>
        <end position="463"/>
    </location>
</feature>
<feature type="helix" evidence="33">
    <location>
        <begin position="470"/>
        <end position="480"/>
    </location>
</feature>
<feature type="strand" evidence="33">
    <location>
        <begin position="484"/>
        <end position="490"/>
    </location>
</feature>
<feature type="strand" evidence="33">
    <location>
        <begin position="504"/>
        <end position="506"/>
    </location>
</feature>
<feature type="helix" evidence="33">
    <location>
        <begin position="518"/>
        <end position="520"/>
    </location>
</feature>
<feature type="helix" evidence="33">
    <location>
        <begin position="534"/>
        <end position="536"/>
    </location>
</feature>
<feature type="strand" evidence="33">
    <location>
        <begin position="540"/>
        <end position="545"/>
    </location>
</feature>
<feature type="strand" evidence="33">
    <location>
        <begin position="550"/>
        <end position="552"/>
    </location>
</feature>
<feature type="helix" evidence="33">
    <location>
        <begin position="554"/>
        <end position="559"/>
    </location>
</feature>
<feature type="strand" evidence="33">
    <location>
        <begin position="562"/>
        <end position="567"/>
    </location>
</feature>
<feature type="helix" evidence="33">
    <location>
        <begin position="568"/>
        <end position="570"/>
    </location>
</feature>
<feature type="helix" evidence="33">
    <location>
        <begin position="572"/>
        <end position="576"/>
    </location>
</feature>
<feature type="helix" evidence="33">
    <location>
        <begin position="582"/>
        <end position="586"/>
    </location>
</feature>
<feature type="turn" evidence="33">
    <location>
        <begin position="589"/>
        <end position="591"/>
    </location>
</feature>
<feature type="strand" evidence="33">
    <location>
        <begin position="593"/>
        <end position="598"/>
    </location>
</feature>
<feature type="strand" evidence="33">
    <location>
        <begin position="601"/>
        <end position="605"/>
    </location>
</feature>
<feature type="strand" evidence="33">
    <location>
        <begin position="607"/>
        <end position="609"/>
    </location>
</feature>
<feature type="helix" evidence="33">
    <location>
        <begin position="617"/>
        <end position="619"/>
    </location>
</feature>
<feature type="strand" evidence="33">
    <location>
        <begin position="621"/>
        <end position="623"/>
    </location>
</feature>
<feature type="turn" evidence="33">
    <location>
        <begin position="624"/>
        <end position="627"/>
    </location>
</feature>
<feature type="strand" evidence="33">
    <location>
        <begin position="628"/>
        <end position="641"/>
    </location>
</feature>
<feature type="strand" evidence="33">
    <location>
        <begin position="645"/>
        <end position="649"/>
    </location>
</feature>
<feature type="strand" evidence="33">
    <location>
        <begin position="652"/>
        <end position="656"/>
    </location>
</feature>
<feature type="strand" evidence="33">
    <location>
        <begin position="661"/>
        <end position="664"/>
    </location>
</feature>
<feature type="turn" evidence="33">
    <location>
        <begin position="674"/>
        <end position="676"/>
    </location>
</feature>
<feature type="strand" evidence="33">
    <location>
        <begin position="685"/>
        <end position="689"/>
    </location>
</feature>
<feature type="strand" evidence="33">
    <location>
        <begin position="697"/>
        <end position="699"/>
    </location>
</feature>
<feature type="strand" evidence="33">
    <location>
        <begin position="705"/>
        <end position="715"/>
    </location>
</feature>
<feature type="strand" evidence="33">
    <location>
        <begin position="728"/>
        <end position="736"/>
    </location>
</feature>
<feature type="strand" evidence="33">
    <location>
        <begin position="741"/>
        <end position="748"/>
    </location>
</feature>
<feature type="helix" evidence="33">
    <location>
        <begin position="754"/>
        <end position="759"/>
    </location>
</feature>
<evidence type="ECO:0000250" key="1">
    <source>
        <dbReference type="UniProtKB" id="P33072"/>
    </source>
</evidence>
<evidence type="ECO:0000250" key="2">
    <source>
        <dbReference type="UniProtKB" id="P58022"/>
    </source>
</evidence>
<evidence type="ECO:0000255" key="3"/>
<evidence type="ECO:0000255" key="4">
    <source>
        <dbReference type="PROSITE-ProRule" id="PRU00196"/>
    </source>
</evidence>
<evidence type="ECO:0000269" key="5">
    <source>
    </source>
</evidence>
<evidence type="ECO:0000269" key="6">
    <source>
    </source>
</evidence>
<evidence type="ECO:0000269" key="7">
    <source>
    </source>
</evidence>
<evidence type="ECO:0000269" key="8">
    <source>
    </source>
</evidence>
<evidence type="ECO:0000269" key="9">
    <source>
    </source>
</evidence>
<evidence type="ECO:0000269" key="10">
    <source>
    </source>
</evidence>
<evidence type="ECO:0000269" key="11">
    <source>
    </source>
</evidence>
<evidence type="ECO:0000269" key="12">
    <source>
    </source>
</evidence>
<evidence type="ECO:0000269" key="13">
    <source>
    </source>
</evidence>
<evidence type="ECO:0000269" key="14">
    <source>
    </source>
</evidence>
<evidence type="ECO:0000269" key="15">
    <source>
    </source>
</evidence>
<evidence type="ECO:0000269" key="16">
    <source>
    </source>
</evidence>
<evidence type="ECO:0000269" key="17">
    <source>
    </source>
</evidence>
<evidence type="ECO:0000269" key="18">
    <source>
    </source>
</evidence>
<evidence type="ECO:0000269" key="19">
    <source>
    </source>
</evidence>
<evidence type="ECO:0000269" key="20">
    <source>
    </source>
</evidence>
<evidence type="ECO:0000269" key="21">
    <source>
    </source>
</evidence>
<evidence type="ECO:0000269" key="22">
    <source>
    </source>
</evidence>
<evidence type="ECO:0000269" key="23">
    <source ref="3"/>
</evidence>
<evidence type="ECO:0000305" key="24"/>
<evidence type="ECO:0000305" key="25">
    <source>
    </source>
</evidence>
<evidence type="ECO:0000305" key="26">
    <source>
    </source>
</evidence>
<evidence type="ECO:0000305" key="27">
    <source>
    </source>
</evidence>
<evidence type="ECO:0000305" key="28">
    <source>
    </source>
</evidence>
<evidence type="ECO:0000305" key="29">
    <source>
    </source>
</evidence>
<evidence type="ECO:0000305" key="30">
    <source>
    </source>
</evidence>
<evidence type="ECO:0000305" key="31">
    <source>
    </source>
</evidence>
<evidence type="ECO:0007744" key="32">
    <source>
        <dbReference type="PDB" id="5ZE3"/>
    </source>
</evidence>
<evidence type="ECO:0007829" key="33">
    <source>
        <dbReference type="PDB" id="5ZE3"/>
    </source>
</evidence>
<name>LOXL2_HUMAN</name>
<proteinExistence type="evidence at protein level"/>
<accession>Q9Y4K0</accession>
<accession>B2R5Q0</accession>
<accession>Q53HV3</accession>
<accession>Q9BW70</accession>
<accession>Q9Y5Y8</accession>
<gene>
    <name type="primary">LOXL2</name>
</gene>
<sequence length="774" mass="86725">MERPLCSHLCSCLAMLALLSPLSLAQYDSWPHYPEYFQQPAPEYHQPQAPANVAKIQLRLAGQKRKHSEGRVEVYYDGQWGTVCDDDFSIHAAHVVCRELGYVEAKSWTASSSYGKGEGPIWLDNLHCTGNEATLAACTSNGWGVTDCKHTEDVGVVCSDKRIPGFKFDNSLINQIENLNIQVEDIRIRAILSTYRKRTPVMEGYVEVKEGKTWKQICDKHWTAKNSRVVCGMFGFPGERTYNTKVYKMFASRRKQRYWPFSMDCTGTEAHISSCKLGPQVSLDPMKNVTCENGLPAVVSCVPGQVFSPDGPSRFRKAYKPEQPLVRLRGGAYIGEGRVEVLKNGEWGTVCDDKWDLVSASVVCRELGFGSAKEAVTGSRLGQGIGPIHLNEIQCTGNEKSIIDCKFNAESQGCNHEEDAGVRCNTPAMGLQKKLRLNGGRNPYEGRVEVLVERNGSLVWGMVCGQNWGIVEAMVVCRQLGLGFASNAFQETWYWHGDVNSNKVVMSGVKCSGTELSLAHCRHDGEDVACPQGGVQYGAGVACSETAPDLVLNAEMVQQTTYLEDRPMFMLQCAMEENCLSASAAQTDPTTGYRRLLRFSSQIHNNGQSDFRPKNGRHAWIWHDCHRHYHSMEVFTHYDLLNLNGTKVAEGHKASFCLEDTECEGDIQKNYECANFGDQGITMGCWDMYRHDIDCQWVDITDVPPGDYLFQVVINPNFEVAESDYSNNIMKCRSRYDGHRIWMYNCHIGGSFSEETEKKFEHFSGLLNNQLSPQ</sequence>
<organism>
    <name type="scientific">Homo sapiens</name>
    <name type="common">Human</name>
    <dbReference type="NCBI Taxonomy" id="9606"/>
    <lineage>
        <taxon>Eukaryota</taxon>
        <taxon>Metazoa</taxon>
        <taxon>Chordata</taxon>
        <taxon>Craniata</taxon>
        <taxon>Vertebrata</taxon>
        <taxon>Euteleostomi</taxon>
        <taxon>Mammalia</taxon>
        <taxon>Eutheria</taxon>
        <taxon>Euarchontoglires</taxon>
        <taxon>Primates</taxon>
        <taxon>Haplorrhini</taxon>
        <taxon>Catarrhini</taxon>
        <taxon>Hominidae</taxon>
        <taxon>Homo</taxon>
    </lineage>
</organism>